<keyword id="KW-1015">Disulfide bond</keyword>
<keyword id="KW-0325">Glycoprotein</keyword>
<keyword id="KW-0378">Hydrolase</keyword>
<keyword id="KW-0645">Protease</keyword>
<keyword id="KW-1185">Reference proteome</keyword>
<keyword id="KW-0964">Secreted</keyword>
<keyword id="KW-0720">Serine protease</keyword>
<keyword id="KW-0732">Signal</keyword>
<keyword id="KW-0865">Zymogen</keyword>
<dbReference type="EC" id="3.4.21.59"/>
<dbReference type="EMBL" id="M24664">
    <property type="protein sequence ID" value="AAA30854.1"/>
    <property type="molecule type" value="Genomic_DNA"/>
</dbReference>
<dbReference type="PIR" id="A32410">
    <property type="entry name" value="A32410"/>
</dbReference>
<dbReference type="RefSeq" id="NP_001091024.1">
    <property type="nucleotide sequence ID" value="NM_001097555.2"/>
</dbReference>
<dbReference type="SMR" id="P15944"/>
<dbReference type="FunCoup" id="P15944">
    <property type="interactions" value="14"/>
</dbReference>
<dbReference type="STRING" id="9615.ENSCAFP00000046459"/>
<dbReference type="BindingDB" id="P15944"/>
<dbReference type="ChEMBL" id="CHEMBL4700"/>
<dbReference type="MEROPS" id="S01.118"/>
<dbReference type="PaxDb" id="9612-ENSCAFP00000041549"/>
<dbReference type="Ensembl" id="ENSCAFT00000047008.3">
    <property type="protein sequence ID" value="ENSCAFP00000041549.3"/>
    <property type="gene ID" value="ENSCAFG00000031939.3"/>
</dbReference>
<dbReference type="Ensembl" id="ENSCAFT00030028446.1">
    <property type="protein sequence ID" value="ENSCAFP00030024818.1"/>
    <property type="gene ID" value="ENSCAFG00030015380.1"/>
</dbReference>
<dbReference type="Ensembl" id="ENSCAFT00040004828.1">
    <property type="protein sequence ID" value="ENSCAFP00040004145.1"/>
    <property type="gene ID" value="ENSCAFG00040002521.1"/>
</dbReference>
<dbReference type="Ensembl" id="ENSCAFT00845040586.1">
    <property type="protein sequence ID" value="ENSCAFP00845031769.1"/>
    <property type="gene ID" value="ENSCAFG00845022862.1"/>
</dbReference>
<dbReference type="GeneID" id="100049001"/>
<dbReference type="KEGG" id="cfa:100049001"/>
<dbReference type="VEuPathDB" id="HostDB:ENSCAFG00845022862"/>
<dbReference type="eggNOG" id="KOG3627">
    <property type="taxonomic scope" value="Eukaryota"/>
</dbReference>
<dbReference type="GeneTree" id="ENSGT00940000162207"/>
<dbReference type="HOGENOM" id="CLU_006842_0_4_1"/>
<dbReference type="InParanoid" id="P15944"/>
<dbReference type="OMA" id="WDEGCAQ"/>
<dbReference type="OrthoDB" id="2768at33554"/>
<dbReference type="TreeFam" id="TF351676"/>
<dbReference type="BRENDA" id="3.4.21.59">
    <property type="organism ID" value="1153"/>
</dbReference>
<dbReference type="Reactome" id="R-CFA-1592389">
    <property type="pathway name" value="Activation of Matrix Metalloproteinases"/>
</dbReference>
<dbReference type="PRO" id="PR:P15944"/>
<dbReference type="Proteomes" id="UP000002254">
    <property type="component" value="Chromosome 6"/>
</dbReference>
<dbReference type="Proteomes" id="UP000694429">
    <property type="component" value="Chromosome 6"/>
</dbReference>
<dbReference type="Proteomes" id="UP000694542">
    <property type="component" value="Chromosome 6"/>
</dbReference>
<dbReference type="Proteomes" id="UP000805418">
    <property type="component" value="Chromosome 6"/>
</dbReference>
<dbReference type="GO" id="GO:0005576">
    <property type="term" value="C:extracellular region"/>
    <property type="evidence" value="ECO:0007669"/>
    <property type="project" value="UniProtKB-SubCell"/>
</dbReference>
<dbReference type="GO" id="GO:0004252">
    <property type="term" value="F:serine-type endopeptidase activity"/>
    <property type="evidence" value="ECO:0007669"/>
    <property type="project" value="UniProtKB-EC"/>
</dbReference>
<dbReference type="GO" id="GO:0006508">
    <property type="term" value="P:proteolysis"/>
    <property type="evidence" value="ECO:0007669"/>
    <property type="project" value="UniProtKB-KW"/>
</dbReference>
<dbReference type="CDD" id="cd00190">
    <property type="entry name" value="Tryp_SPc"/>
    <property type="match status" value="1"/>
</dbReference>
<dbReference type="FunFam" id="2.40.10.10:FF:000024">
    <property type="entry name" value="Serine protease 53"/>
    <property type="match status" value="1"/>
</dbReference>
<dbReference type="Gene3D" id="2.40.10.10">
    <property type="entry name" value="Trypsin-like serine proteases"/>
    <property type="match status" value="2"/>
</dbReference>
<dbReference type="InterPro" id="IPR009003">
    <property type="entry name" value="Peptidase_S1_PA"/>
</dbReference>
<dbReference type="InterPro" id="IPR043504">
    <property type="entry name" value="Peptidase_S1_PA_chymotrypsin"/>
</dbReference>
<dbReference type="InterPro" id="IPR001314">
    <property type="entry name" value="Peptidase_S1A"/>
</dbReference>
<dbReference type="InterPro" id="IPR001254">
    <property type="entry name" value="Trypsin_dom"/>
</dbReference>
<dbReference type="InterPro" id="IPR018114">
    <property type="entry name" value="TRYPSIN_HIS"/>
</dbReference>
<dbReference type="InterPro" id="IPR033116">
    <property type="entry name" value="TRYPSIN_SER"/>
</dbReference>
<dbReference type="PANTHER" id="PTHR24253:SF144">
    <property type="entry name" value="CHYMOTRYPSIN-LIKE PROTEASE CTRL-1-RELATED"/>
    <property type="match status" value="1"/>
</dbReference>
<dbReference type="PANTHER" id="PTHR24253">
    <property type="entry name" value="TRANSMEMBRANE PROTEASE SERINE"/>
    <property type="match status" value="1"/>
</dbReference>
<dbReference type="Pfam" id="PF00089">
    <property type="entry name" value="Trypsin"/>
    <property type="match status" value="1"/>
</dbReference>
<dbReference type="PRINTS" id="PR00722">
    <property type="entry name" value="CHYMOTRYPSIN"/>
</dbReference>
<dbReference type="SMART" id="SM00020">
    <property type="entry name" value="Tryp_SPc"/>
    <property type="match status" value="1"/>
</dbReference>
<dbReference type="SUPFAM" id="SSF50494">
    <property type="entry name" value="Trypsin-like serine proteases"/>
    <property type="match status" value="1"/>
</dbReference>
<dbReference type="PROSITE" id="PS50240">
    <property type="entry name" value="TRYPSIN_DOM"/>
    <property type="match status" value="1"/>
</dbReference>
<dbReference type="PROSITE" id="PS00134">
    <property type="entry name" value="TRYPSIN_HIS"/>
    <property type="match status" value="1"/>
</dbReference>
<dbReference type="PROSITE" id="PS00135">
    <property type="entry name" value="TRYPSIN_SER"/>
    <property type="match status" value="1"/>
</dbReference>
<evidence type="ECO:0000250" key="1"/>
<evidence type="ECO:0000255" key="2"/>
<evidence type="ECO:0000255" key="3">
    <source>
        <dbReference type="PROSITE-ProRule" id="PRU00274"/>
    </source>
</evidence>
<reference key="1">
    <citation type="journal article" date="1989" name="Biochemistry">
        <title>Molecular cloning of dog mast cell tryptase and a related protease: structural evidence of a unique mode of serine protease activation.</title>
        <authorList>
            <person name="Vanderslice P."/>
            <person name="Craik C.S."/>
            <person name="Nadel J.A."/>
            <person name="Caughey G.H."/>
        </authorList>
    </citation>
    <scope>NUCLEOTIDE SEQUENCE [GENOMIC DNA]</scope>
</reference>
<sequence length="275" mass="30088">MPSPLVLALALLGSLVPVSPAPGQALQRVGIVGGREAPGSKWPWQVSLRLKGQYWRHICGGSLIHPQWVLTAAHCVGPNVVCPEEIRVQLREQHLYYQDHLLPVNRIVMHPNYYTPENGADIALLELEDPVNVSAHVQPVTLPPALQTFPTGTPCWVTGWGDVHSGTPLPPPFPLKQVKVPIVENSMCDVQYHLGLSTGDGVRIVREDMLCAGNSKSDSCQGDSGGPLVCRVRGVWLQAGVVSWGEGCAQPNRPGIYTRVAYYLDWIHQYVPKEP</sequence>
<accession>P15944</accession>
<feature type="signal peptide" evidence="2">
    <location>
        <begin position="1"/>
        <end position="20"/>
    </location>
</feature>
<feature type="propeptide" id="PRO_0000027473" description="Activation peptide" evidence="1">
    <location>
        <begin position="21"/>
        <end position="30"/>
    </location>
</feature>
<feature type="chain" id="PRO_0000027474" description="Tryptase">
    <location>
        <begin position="31"/>
        <end position="275"/>
    </location>
</feature>
<feature type="domain" description="Peptidase S1" evidence="3">
    <location>
        <begin position="31"/>
        <end position="272"/>
    </location>
</feature>
<feature type="active site" description="Charge relay system" evidence="1">
    <location>
        <position position="74"/>
    </location>
</feature>
<feature type="active site" description="Charge relay system" evidence="1">
    <location>
        <position position="121"/>
    </location>
</feature>
<feature type="active site" description="Charge relay system" evidence="1">
    <location>
        <position position="224"/>
    </location>
</feature>
<feature type="glycosylation site" description="N-linked (GlcNAc...) asparagine" evidence="2">
    <location>
        <position position="132"/>
    </location>
</feature>
<feature type="disulfide bond" evidence="3">
    <location>
        <begin position="59"/>
        <end position="75"/>
    </location>
</feature>
<feature type="disulfide bond" evidence="3">
    <location>
        <begin position="155"/>
        <end position="230"/>
    </location>
</feature>
<feature type="disulfide bond" evidence="3">
    <location>
        <begin position="188"/>
        <end position="211"/>
    </location>
</feature>
<feature type="disulfide bond" evidence="3">
    <location>
        <begin position="220"/>
        <end position="248"/>
    </location>
</feature>
<comment type="function">
    <text>Tryptase is the major neutral protease present in mast cells and is secreted upon the coupled activation-degranulation response of this cell type.</text>
</comment>
<comment type="catalytic activity">
    <reaction>
        <text>Preferential cleavage: Arg-|-Xaa, Lys-|-Xaa, but with more restricted specificity than trypsin.</text>
        <dbReference type="EC" id="3.4.21.59"/>
    </reaction>
</comment>
<comment type="subunit">
    <text>Homotetramer.</text>
</comment>
<comment type="subcellular location">
    <subcellularLocation>
        <location>Secreted</location>
    </subcellularLocation>
    <text>Released from the secretory granules upon mast cell activation.</text>
</comment>
<comment type="similarity">
    <text evidence="3">Belongs to the peptidase S1 family. Tryptase subfamily.</text>
</comment>
<proteinExistence type="inferred from homology"/>
<protein>
    <recommendedName>
        <fullName>Tryptase</fullName>
        <ecNumber>3.4.21.59</ecNumber>
    </recommendedName>
</protein>
<name>TRYT_CANLF</name>
<organism>
    <name type="scientific">Canis lupus familiaris</name>
    <name type="common">Dog</name>
    <name type="synonym">Canis familiaris</name>
    <dbReference type="NCBI Taxonomy" id="9615"/>
    <lineage>
        <taxon>Eukaryota</taxon>
        <taxon>Metazoa</taxon>
        <taxon>Chordata</taxon>
        <taxon>Craniata</taxon>
        <taxon>Vertebrata</taxon>
        <taxon>Euteleostomi</taxon>
        <taxon>Mammalia</taxon>
        <taxon>Eutheria</taxon>
        <taxon>Laurasiatheria</taxon>
        <taxon>Carnivora</taxon>
        <taxon>Caniformia</taxon>
        <taxon>Canidae</taxon>
        <taxon>Canis</taxon>
    </lineage>
</organism>